<keyword id="KW-1003">Cell membrane</keyword>
<keyword id="KW-0325">Glycoprotein</keyword>
<keyword id="KW-0407">Ion channel</keyword>
<keyword id="KW-0406">Ion transport</keyword>
<keyword id="KW-0472">Membrane</keyword>
<keyword id="KW-0630">Potassium</keyword>
<keyword id="KW-0631">Potassium channel</keyword>
<keyword id="KW-0633">Potassium transport</keyword>
<keyword id="KW-1185">Reference proteome</keyword>
<keyword id="KW-0812">Transmembrane</keyword>
<keyword id="KW-1133">Transmembrane helix</keyword>
<keyword id="KW-0813">Transport</keyword>
<keyword id="KW-0851">Voltage-gated channel</keyword>
<proteinExistence type="evidence at protein level"/>
<comment type="function">
    <text evidence="1 2 4 6">Ancillary protein that functions as a regulatory subunit of the voltage-gated potassium (Kv) channel complex composed of pore-forming and potassium-conducting alpha subunits and of regulatory beta subunits. KCNE2 beta subunit modulates the gating kinetics and enhances stability of the channel complex (PubMed:11420311, PubMed:19219384). Alters the gating of the delayed rectifier Kv channel containing KCNB1 alpha subunit (PubMed:19219384). Associates with KCNH2/HERG alpha subunit Kv channel to form the rapidly activating component of the delayed rectifying potassium current (IKr) in heart (By similarity). May associate with KCNQ2 and/or KCNQ3 alpha subunits to modulate the native M-type current (By similarity). May associate with HCN1 and HCN2 channel subunits to increase potassium current (PubMed:11420311). Forms a heterooligomer complex with KCNQ1/KVLQT1 alpha subunits which leads to currents with an apparently instantaneous activation, a rapid deactivation process and a linear current-voltage relationship and decreases the amplitude of the outward current (By similarity). KCNQ1-KCNE2 channel associates with Na(+)-coupled myo-inositol symporter in the apical membrane of choroid plexus epithelium and regulates the myo-inositol gradient between blood and cerebrospinal fluid with an impact on neuron excitability (By similarity).</text>
</comment>
<comment type="subunit">
    <text evidence="2 4 5 6">Interacts with KCNB1 (PubMed:19219384). Associates with KCNH2/ERG1 (By similarity). May associate with KCNQ2 and KCNQ3 (By similarity). Associates with HCN1 and probably HCN2 (PubMed:11420311). Heteromultimer with KCNC2. Interacts with KCNC2 (PubMed:14679187). Interacts with KCNQ1; forms a heterooligomer complex that targets to the membrane raft and leading to currents with an apparently instantaneous activation, a rapid deactivation process and a linear current-voltage relationship and decreases the amplitude of the outward current (By similarity).</text>
</comment>
<comment type="subcellular location">
    <subcellularLocation>
        <location evidence="5 6">Cell membrane</location>
        <topology evidence="8">Single-pass type I membrane protein</topology>
    </subcellularLocation>
    <subcellularLocation>
        <location evidence="1">Apical cell membrane</location>
        <topology evidence="3">Single-pass membrane protein</topology>
    </subcellularLocation>
    <text evidence="6">Colocalizes with KCNB1 at the plasma membrane.</text>
</comment>
<comment type="tissue specificity">
    <text evidence="6">Expressed in the heart (PubMed:19219384).</text>
</comment>
<comment type="similarity">
    <text evidence="8">Belongs to the potassium channel KCNE family.</text>
</comment>
<evidence type="ECO:0000250" key="1">
    <source>
        <dbReference type="UniProtKB" id="Q9D808"/>
    </source>
</evidence>
<evidence type="ECO:0000250" key="2">
    <source>
        <dbReference type="UniProtKB" id="Q9Y6J6"/>
    </source>
</evidence>
<evidence type="ECO:0000255" key="3"/>
<evidence type="ECO:0000269" key="4">
    <source>
    </source>
</evidence>
<evidence type="ECO:0000269" key="5">
    <source>
    </source>
</evidence>
<evidence type="ECO:0000269" key="6">
    <source>
    </source>
</evidence>
<evidence type="ECO:0000303" key="7">
    <source>
    </source>
</evidence>
<evidence type="ECO:0000305" key="8"/>
<evidence type="ECO:0000312" key="9">
    <source>
        <dbReference type="RGD" id="621383"/>
    </source>
</evidence>
<name>KCNE2_RAT</name>
<protein>
    <recommendedName>
        <fullName>Potassium voltage-gated channel subfamily E member 2</fullName>
    </recommendedName>
    <alternativeName>
        <fullName>MinK-related peptide 1</fullName>
        <shortName evidence="7">MiRP1</shortName>
    </alternativeName>
    <alternativeName>
        <fullName>Minimum potassium ion channel-related peptide 1</fullName>
    </alternativeName>
    <alternativeName>
        <fullName>Potassium channel subunit beta MiRP1</fullName>
    </alternativeName>
</protein>
<reference key="1">
    <citation type="journal article" date="1999" name="Cell">
        <title>MiRP1 forms IKr potassium channels with HERG and is associated with cardiac arrhythmia.</title>
        <authorList>
            <person name="Abbott G.W."/>
            <person name="Sesti F."/>
            <person name="Splawski I."/>
            <person name="Buck M.E."/>
            <person name="Lehmann M.H."/>
            <person name="Timothy K.W."/>
            <person name="Keating M.T."/>
            <person name="Goldstein S.A.N."/>
        </authorList>
    </citation>
    <scope>NUCLEOTIDE SEQUENCE [MRNA]</scope>
    <source>
        <strain>Sprague-Dawley</strain>
        <tissue>Heart</tissue>
    </source>
</reference>
<reference key="2">
    <citation type="journal article" date="2004" name="Genome Res.">
        <title>The status, quality, and expansion of the NIH full-length cDNA project: the Mammalian Gene Collection (MGC).</title>
        <authorList>
            <consortium name="The MGC Project Team"/>
        </authorList>
    </citation>
    <scope>NUCLEOTIDE SEQUENCE [LARGE SCALE MRNA]</scope>
    <source>
        <tissue>Ovary</tissue>
    </source>
</reference>
<reference key="3">
    <citation type="journal article" date="2001" name="Circ. Res.">
        <title>MinK-related peptide 1: a beta subunit for the HCN ion channel subunit family enhances expression and speeds activation.</title>
        <authorList>
            <person name="Yu H."/>
            <person name="Wu J."/>
            <person name="Potapova I."/>
            <person name="Wymore R.T."/>
            <person name="Holmes B."/>
            <person name="Zuckerman J."/>
            <person name="Pan Z."/>
            <person name="Wang H."/>
            <person name="Shi W."/>
            <person name="Robinson R.B."/>
            <person name="El-Maghrabi M.R."/>
            <person name="Benjamin W."/>
            <person name="Dixon J.E."/>
            <person name="McKinnon D."/>
            <person name="Cohen I.S."/>
            <person name="Wymore R."/>
        </authorList>
    </citation>
    <scope>FUNCTION</scope>
    <scope>INTERACTION WITH HCN1</scope>
</reference>
<reference key="4">
    <citation type="journal article" date="2004" name="J. Biol. Chem.">
        <title>MinK, MiRP1, and MiRP2 diversify Kv3.1 and Kv3.2 potassium channel gating.</title>
        <authorList>
            <person name="Lewis A."/>
            <person name="McCrossan Z.A."/>
            <person name="Abbott G.W."/>
        </authorList>
    </citation>
    <scope>SUBUNIT</scope>
    <scope>INTERACTION WITH KCNC2</scope>
    <scope>SUBCELLULAR LOCATION</scope>
</reference>
<reference key="5">
    <citation type="journal article" date="2009" name="J. Membr. Biol.">
        <title>Regulation of the Kv2.1 potassium channel by MinK and MiRP1.</title>
        <authorList>
            <person name="McCrossan Z.A."/>
            <person name="Roepke T.K."/>
            <person name="Lewis A."/>
            <person name="Panaghie G."/>
            <person name="Abbott G.W."/>
        </authorList>
    </citation>
    <scope>FUNCTION</scope>
    <scope>INTERACTION WITH KCNB1</scope>
    <scope>SUBCELLULAR LOCATION</scope>
    <scope>TISSUE SPECIFICITY</scope>
</reference>
<accession>P63161</accession>
<accession>Q5FVT9</accession>
<accession>Q9WTW0</accession>
<feature type="chain" id="PRO_0000144288" description="Potassium voltage-gated channel subfamily E member 2">
    <location>
        <begin position="1"/>
        <end position="123"/>
    </location>
</feature>
<feature type="transmembrane region" description="Helical" evidence="3">
    <location>
        <begin position="49"/>
        <end position="69"/>
    </location>
</feature>
<feature type="topological domain" description="Cytoplasmic" evidence="3">
    <location>
        <begin position="70"/>
        <end position="123"/>
    </location>
</feature>
<feature type="glycosylation site" description="N-linked (GlcNAc...) asparagine" evidence="3">
    <location>
        <position position="6"/>
    </location>
</feature>
<feature type="glycosylation site" description="N-linked (GlcNAc...) asparagine" evidence="3">
    <location>
        <position position="29"/>
    </location>
</feature>
<sequence>MTTLANLTQTLEDAFKKVFITYMDSWRRNTTAEQQALQARVDAENFYYVILYLMVMIGMFAFIVVAILVSTVKSKRREHSQDPYHQYIVEDWQQKYRSQILHLEDSKATIHENLGATGFTVSP</sequence>
<dbReference type="EMBL" id="AF071003">
    <property type="protein sequence ID" value="AAD28087.1"/>
    <property type="molecule type" value="mRNA"/>
</dbReference>
<dbReference type="EMBL" id="BC089778">
    <property type="protein sequence ID" value="AAH89778.1"/>
    <property type="molecule type" value="mRNA"/>
</dbReference>
<dbReference type="RefSeq" id="NP_598287.1">
    <property type="nucleotide sequence ID" value="NM_133603.2"/>
</dbReference>
<dbReference type="RefSeq" id="XP_006248085.1">
    <property type="nucleotide sequence ID" value="XM_006248023.3"/>
</dbReference>
<dbReference type="RefSeq" id="XP_008766776.1">
    <property type="nucleotide sequence ID" value="XM_008768554.2"/>
</dbReference>
<dbReference type="SMR" id="P63161"/>
<dbReference type="CORUM" id="P63161"/>
<dbReference type="FunCoup" id="P63161">
    <property type="interactions" value="15"/>
</dbReference>
<dbReference type="STRING" id="10116.ENSRNOP00000045279"/>
<dbReference type="GlyCosmos" id="P63161">
    <property type="glycosylation" value="2 sites, No reported glycans"/>
</dbReference>
<dbReference type="GlyGen" id="P63161">
    <property type="glycosylation" value="2 sites"/>
</dbReference>
<dbReference type="iPTMnet" id="P63161"/>
<dbReference type="PhosphoSitePlus" id="P63161"/>
<dbReference type="PaxDb" id="10116-ENSRNOP00000045279"/>
<dbReference type="Ensembl" id="ENSRNOT00000040844.5">
    <property type="protein sequence ID" value="ENSRNOP00000045279.3"/>
    <property type="gene ID" value="ENSRNOG00000029811.5"/>
</dbReference>
<dbReference type="Ensembl" id="ENSRNOT00000093948.1">
    <property type="protein sequence ID" value="ENSRNOP00000081079.1"/>
    <property type="gene ID" value="ENSRNOG00000029811.5"/>
</dbReference>
<dbReference type="Ensembl" id="ENSRNOT00000094999.1">
    <property type="protein sequence ID" value="ENSRNOP00000078157.1"/>
    <property type="gene ID" value="ENSRNOG00000029811.5"/>
</dbReference>
<dbReference type="Ensembl" id="ENSRNOT00000099713.1">
    <property type="protein sequence ID" value="ENSRNOP00000080461.1"/>
    <property type="gene ID" value="ENSRNOG00000029811.5"/>
</dbReference>
<dbReference type="GeneID" id="171138"/>
<dbReference type="KEGG" id="rno:171138"/>
<dbReference type="UCSC" id="RGD:621383">
    <property type="organism name" value="rat"/>
</dbReference>
<dbReference type="AGR" id="RGD:621383"/>
<dbReference type="CTD" id="9992"/>
<dbReference type="RGD" id="621383">
    <property type="gene designation" value="Kcne2"/>
</dbReference>
<dbReference type="eggNOG" id="ENOG502S1GJ">
    <property type="taxonomic scope" value="Eukaryota"/>
</dbReference>
<dbReference type="GeneTree" id="ENSGT00940000154497"/>
<dbReference type="HOGENOM" id="CLU_1991831_0_0_1"/>
<dbReference type="InParanoid" id="P63161"/>
<dbReference type="OMA" id="RIFVTYM"/>
<dbReference type="OrthoDB" id="9267127at2759"/>
<dbReference type="PhylomeDB" id="P63161"/>
<dbReference type="TreeFam" id="TF336058"/>
<dbReference type="Reactome" id="R-RNO-5576890">
    <property type="pathway name" value="Phase 3 - rapid repolarisation"/>
</dbReference>
<dbReference type="Reactome" id="R-RNO-5576893">
    <property type="pathway name" value="Phase 2 - plateau phase"/>
</dbReference>
<dbReference type="PRO" id="PR:P63161"/>
<dbReference type="Proteomes" id="UP000002494">
    <property type="component" value="Chromosome 11"/>
</dbReference>
<dbReference type="Bgee" id="ENSRNOG00000029811">
    <property type="expression patterns" value="Expressed in ovary and 17 other cell types or tissues"/>
</dbReference>
<dbReference type="GO" id="GO:0016324">
    <property type="term" value="C:apical plasma membrane"/>
    <property type="evidence" value="ECO:0000266"/>
    <property type="project" value="RGD"/>
</dbReference>
<dbReference type="GO" id="GO:0009986">
    <property type="term" value="C:cell surface"/>
    <property type="evidence" value="ECO:0000314"/>
    <property type="project" value="RGD"/>
</dbReference>
<dbReference type="GO" id="GO:0016020">
    <property type="term" value="C:membrane"/>
    <property type="evidence" value="ECO:0000266"/>
    <property type="project" value="RGD"/>
</dbReference>
<dbReference type="GO" id="GO:0005886">
    <property type="term" value="C:plasma membrane"/>
    <property type="evidence" value="ECO:0000314"/>
    <property type="project" value="UniProtKB"/>
</dbReference>
<dbReference type="GO" id="GO:0008076">
    <property type="term" value="C:voltage-gated potassium channel complex"/>
    <property type="evidence" value="ECO:0000314"/>
    <property type="project" value="BHF-UCL"/>
</dbReference>
<dbReference type="GO" id="GO:0042802">
    <property type="term" value="F:identical protein binding"/>
    <property type="evidence" value="ECO:0000353"/>
    <property type="project" value="RGD"/>
</dbReference>
<dbReference type="GO" id="GO:0005261">
    <property type="term" value="F:monoatomic cation channel activity"/>
    <property type="evidence" value="ECO:0000304"/>
    <property type="project" value="RGD"/>
</dbReference>
<dbReference type="GO" id="GO:0015459">
    <property type="term" value="F:potassium channel regulator activity"/>
    <property type="evidence" value="ECO:0000314"/>
    <property type="project" value="UniProtKB"/>
</dbReference>
<dbReference type="GO" id="GO:0044325">
    <property type="term" value="F:transmembrane transporter binding"/>
    <property type="evidence" value="ECO:0000314"/>
    <property type="project" value="BHF-UCL"/>
</dbReference>
<dbReference type="GO" id="GO:0005249">
    <property type="term" value="F:voltage-gated potassium channel activity"/>
    <property type="evidence" value="ECO:0000314"/>
    <property type="project" value="RGD"/>
</dbReference>
<dbReference type="GO" id="GO:1902282">
    <property type="term" value="F:voltage-gated potassium channel activity involved in ventricular cardiac muscle cell action potential repolarization"/>
    <property type="evidence" value="ECO:0000266"/>
    <property type="project" value="RGD"/>
</dbReference>
<dbReference type="GO" id="GO:0086002">
    <property type="term" value="P:cardiac muscle cell action potential involved in contraction"/>
    <property type="evidence" value="ECO:0000266"/>
    <property type="project" value="RGD"/>
</dbReference>
<dbReference type="GO" id="GO:0071466">
    <property type="term" value="P:cellular response to xenobiotic stimulus"/>
    <property type="evidence" value="ECO:0000314"/>
    <property type="project" value="BHF-UCL"/>
</dbReference>
<dbReference type="GO" id="GO:0051649">
    <property type="term" value="P:establishment of localization in cell"/>
    <property type="evidence" value="ECO:0000266"/>
    <property type="project" value="RGD"/>
</dbReference>
<dbReference type="GO" id="GO:0015705">
    <property type="term" value="P:iodide transport"/>
    <property type="evidence" value="ECO:0000266"/>
    <property type="project" value="RGD"/>
</dbReference>
<dbReference type="GO" id="GO:0086009">
    <property type="term" value="P:membrane repolarization"/>
    <property type="evidence" value="ECO:0000314"/>
    <property type="project" value="BHF-UCL"/>
</dbReference>
<dbReference type="GO" id="GO:0086011">
    <property type="term" value="P:membrane repolarization during action potential"/>
    <property type="evidence" value="ECO:0000314"/>
    <property type="project" value="BHF-UCL"/>
</dbReference>
<dbReference type="GO" id="GO:0098915">
    <property type="term" value="P:membrane repolarization during ventricular cardiac muscle cell action potential"/>
    <property type="evidence" value="ECO:0000266"/>
    <property type="project" value="RGD"/>
</dbReference>
<dbReference type="GO" id="GO:0033555">
    <property type="term" value="P:multicellular organismal response to stress"/>
    <property type="evidence" value="ECO:0000266"/>
    <property type="project" value="RGD"/>
</dbReference>
<dbReference type="GO" id="GO:0015798">
    <property type="term" value="P:myo-inositol transport"/>
    <property type="evidence" value="ECO:0000266"/>
    <property type="project" value="RGD"/>
</dbReference>
<dbReference type="GO" id="GO:1902260">
    <property type="term" value="P:negative regulation of delayed rectifier potassium channel activity"/>
    <property type="evidence" value="ECO:0000314"/>
    <property type="project" value="UniProtKB"/>
</dbReference>
<dbReference type="GO" id="GO:1901800">
    <property type="term" value="P:positive regulation of proteasomal protein catabolic process"/>
    <property type="evidence" value="ECO:0000266"/>
    <property type="project" value="RGD"/>
</dbReference>
<dbReference type="GO" id="GO:0097623">
    <property type="term" value="P:potassium ion export across plasma membrane"/>
    <property type="evidence" value="ECO:0000314"/>
    <property type="project" value="BHF-UCL"/>
</dbReference>
<dbReference type="GO" id="GO:1990573">
    <property type="term" value="P:potassium ion import across plasma membrane"/>
    <property type="evidence" value="ECO:0000315"/>
    <property type="project" value="BHF-UCL"/>
</dbReference>
<dbReference type="GO" id="GO:0071805">
    <property type="term" value="P:potassium ion transmembrane transport"/>
    <property type="evidence" value="ECO:0000314"/>
    <property type="project" value="BHF-UCL"/>
</dbReference>
<dbReference type="GO" id="GO:0008104">
    <property type="term" value="P:protein localization"/>
    <property type="evidence" value="ECO:0000266"/>
    <property type="project" value="RGD"/>
</dbReference>
<dbReference type="GO" id="GO:0086091">
    <property type="term" value="P:regulation of heart rate by cardiac conduction"/>
    <property type="evidence" value="ECO:0000266"/>
    <property type="project" value="RGD"/>
</dbReference>
<dbReference type="GO" id="GO:0060306">
    <property type="term" value="P:regulation of membrane repolarization"/>
    <property type="evidence" value="ECO:0000314"/>
    <property type="project" value="BHF-UCL"/>
</dbReference>
<dbReference type="GO" id="GO:1901379">
    <property type="term" value="P:regulation of potassium ion transmembrane transport"/>
    <property type="evidence" value="ECO:0000314"/>
    <property type="project" value="BHF-UCL"/>
</dbReference>
<dbReference type="GO" id="GO:0060307">
    <property type="term" value="P:regulation of ventricular cardiac muscle cell membrane repolarization"/>
    <property type="evidence" value="ECO:0000266"/>
    <property type="project" value="RGD"/>
</dbReference>
<dbReference type="GO" id="GO:0043586">
    <property type="term" value="P:tongue development"/>
    <property type="evidence" value="ECO:0000270"/>
    <property type="project" value="RGD"/>
</dbReference>
<dbReference type="GO" id="GO:0086005">
    <property type="term" value="P:ventricular cardiac muscle cell action potential"/>
    <property type="evidence" value="ECO:0000266"/>
    <property type="project" value="RGD"/>
</dbReference>
<dbReference type="InterPro" id="IPR000369">
    <property type="entry name" value="K_chnl_KCNE"/>
</dbReference>
<dbReference type="InterPro" id="IPR005425">
    <property type="entry name" value="K_chnl_volt-dep_bsu_KCNE2"/>
</dbReference>
<dbReference type="PANTHER" id="PTHR15282">
    <property type="entry name" value="POTASSIUM VOLTAGE-GATED CHANNEL SUBFAMILY E MEMBER 1, 3"/>
    <property type="match status" value="1"/>
</dbReference>
<dbReference type="PANTHER" id="PTHR15282:SF8">
    <property type="entry name" value="POTASSIUM VOLTAGE-GATED CHANNEL SUBFAMILY E MEMBER 2"/>
    <property type="match status" value="1"/>
</dbReference>
<dbReference type="Pfam" id="PF02060">
    <property type="entry name" value="ISK_Channel"/>
    <property type="match status" value="1"/>
</dbReference>
<dbReference type="PRINTS" id="PR01605">
    <property type="entry name" value="KCNE2CHANNEL"/>
</dbReference>
<gene>
    <name evidence="9" type="primary">Kcne2</name>
</gene>
<organism>
    <name type="scientific">Rattus norvegicus</name>
    <name type="common">Rat</name>
    <dbReference type="NCBI Taxonomy" id="10116"/>
    <lineage>
        <taxon>Eukaryota</taxon>
        <taxon>Metazoa</taxon>
        <taxon>Chordata</taxon>
        <taxon>Craniata</taxon>
        <taxon>Vertebrata</taxon>
        <taxon>Euteleostomi</taxon>
        <taxon>Mammalia</taxon>
        <taxon>Eutheria</taxon>
        <taxon>Euarchontoglires</taxon>
        <taxon>Glires</taxon>
        <taxon>Rodentia</taxon>
        <taxon>Myomorpha</taxon>
        <taxon>Muroidea</taxon>
        <taxon>Muridae</taxon>
        <taxon>Murinae</taxon>
        <taxon>Rattus</taxon>
    </lineage>
</organism>